<accession>A0A6M3Z4E7</accession>
<organism>
    <name type="scientific">Tetramorium bicarinatum</name>
    <name type="common">Tramp ant</name>
    <dbReference type="NCBI Taxonomy" id="219812"/>
    <lineage>
        <taxon>Eukaryota</taxon>
        <taxon>Metazoa</taxon>
        <taxon>Ecdysozoa</taxon>
        <taxon>Arthropoda</taxon>
        <taxon>Hexapoda</taxon>
        <taxon>Insecta</taxon>
        <taxon>Pterygota</taxon>
        <taxon>Neoptera</taxon>
        <taxon>Endopterygota</taxon>
        <taxon>Hymenoptera</taxon>
        <taxon>Apocrita</taxon>
        <taxon>Aculeata</taxon>
        <taxon>Formicoidea</taxon>
        <taxon>Formicidae</taxon>
        <taxon>Myrmicinae</taxon>
        <taxon>Tetramorium</taxon>
    </lineage>
</organism>
<feature type="signal peptide" evidence="1">
    <location>
        <begin position="1"/>
        <end position="23"/>
    </location>
</feature>
<feature type="propeptide" id="PRO_0000453045" evidence="6">
    <location>
        <begin position="24"/>
        <end position="25"/>
    </location>
</feature>
<feature type="peptide" id="PRO_0000453046" description="U14-myrmicitoxin-Tb1a" evidence="2">
    <location>
        <begin position="26"/>
        <end position="35"/>
    </location>
</feature>
<feature type="modified residue" description="Glutamine amide" evidence="2">
    <location>
        <position position="35"/>
    </location>
</feature>
<name>TX14A_TETBN</name>
<sequence>MKIIKLITIFTMMATLMXXVANGEPIPPNAVKSLQG</sequence>
<reference evidence="7" key="1">
    <citation type="journal article" date="2018" name="J. Proteome Res.">
        <title>Deciphering the Molecular Diversity of an Ant Venom Peptidome through a Venomics Approach.</title>
        <authorList>
            <person name="Touchard A."/>
            <person name="Tene N."/>
            <person name="Song P.C.T."/>
            <person name="Lefranc B."/>
            <person name="Leprince J."/>
            <person name="Treilhou M."/>
            <person name="Bonnafe E."/>
        </authorList>
    </citation>
    <scope>NUCLEOTIDE SEQUENCE [MRNA]</scope>
    <scope>PROTEIN SEQUENCE OF 26-36</scope>
    <scope>SUBCELLULAR LOCATION</scope>
    <scope>MASS SPECTROMETRY</scope>
    <scope>AMIDATION AT GLN-35</scope>
    <source>
        <tissue>Venom</tissue>
        <tissue>Venom gland</tissue>
    </source>
</reference>
<reference key="2">
    <citation type="journal article" date="2023" name="Toxins">
        <title>Discovery of an insect neuroactive helix ring peptide from ant venom.</title>
        <authorList>
            <person name="Barasse V."/>
            <person name="Jouvensal L."/>
            <person name="Boy G."/>
            <person name="Billet A."/>
            <person name="Ascoet S."/>
            <person name="Lefranc B."/>
            <person name="Leprince J."/>
            <person name="Dejean A."/>
            <person name="Lacotte V."/>
            <person name="Rahioui I."/>
            <person name="Sivignon C."/>
            <person name="Gaget K."/>
            <person name="Ribeiro Lopes M."/>
            <person name="Calevro F."/>
            <person name="Da Silva P."/>
            <person name="Loth K."/>
            <person name="Paquet F."/>
            <person name="Treilhou M."/>
            <person name="Bonnafe E."/>
            <person name="Touchard A."/>
        </authorList>
    </citation>
    <scope>SYNTHESIS OF 26-35</scope>
</reference>
<keyword id="KW-0027">Amidation</keyword>
<keyword id="KW-0903">Direct protein sequencing</keyword>
<keyword id="KW-0964">Secreted</keyword>
<keyword id="KW-0732">Signal</keyword>
<dbReference type="EMBL" id="MN397948">
    <property type="protein sequence ID" value="QJP03495.1"/>
    <property type="molecule type" value="mRNA"/>
</dbReference>
<dbReference type="GO" id="GO:0005576">
    <property type="term" value="C:extracellular region"/>
    <property type="evidence" value="ECO:0000314"/>
    <property type="project" value="UniProtKB"/>
</dbReference>
<protein>
    <recommendedName>
        <fullName evidence="4 5">U14-myrmicitoxin-Tb1a</fullName>
        <shortName evidence="4 5">U14-MYRTX-Tb1a</shortName>
    </recommendedName>
</protein>
<comment type="function">
    <text evidence="3">Venom protein with unknown function. Does not induce paralysis when a high dose is administered by intrathoracic injection into the blowfly Lucilia caesar.</text>
</comment>
<comment type="subcellular location">
    <subcellularLocation>
        <location evidence="2">Secreted</location>
    </subcellularLocation>
</comment>
<comment type="tissue specificity">
    <text evidence="2">Expressed by the venom gland.</text>
</comment>
<comment type="mass spectrometry"/>
<evidence type="ECO:0000255" key="1"/>
<evidence type="ECO:0000269" key="2">
    <source>
    </source>
</evidence>
<evidence type="ECO:0000269" key="3">
    <source>
    </source>
</evidence>
<evidence type="ECO:0000303" key="4">
    <source>
    </source>
</evidence>
<evidence type="ECO:0000303" key="5">
    <source>
    </source>
</evidence>
<evidence type="ECO:0000305" key="6">
    <source>
    </source>
</evidence>
<evidence type="ECO:0000312" key="7">
    <source>
        <dbReference type="EMBL" id="QJP03495.1"/>
    </source>
</evidence>
<proteinExistence type="evidence at protein level"/>